<reference key="1">
    <citation type="journal article" date="2005" name="Jpn. Agric. Res. Q.">
        <title>Genome sequence of Xanthomonas oryzae pv. oryzae suggests contribution of large numbers of effector genes and insertion sequences to its race diversity.</title>
        <authorList>
            <person name="Ochiai H."/>
            <person name="Inoue Y."/>
            <person name="Takeya M."/>
            <person name="Sasaki A."/>
            <person name="Kaku H."/>
        </authorList>
    </citation>
    <scope>NUCLEOTIDE SEQUENCE [LARGE SCALE GENOMIC DNA]</scope>
    <source>
        <strain>MAFF 311018</strain>
    </source>
</reference>
<keyword id="KW-0378">Hydrolase</keyword>
<keyword id="KW-0460">Magnesium</keyword>
<keyword id="KW-0511">Multifunctional enzyme</keyword>
<keyword id="KW-0548">Nucleotidyltransferase</keyword>
<keyword id="KW-0677">Repeat</keyword>
<keyword id="KW-0808">Transferase</keyword>
<organism>
    <name type="scientific">Xanthomonas oryzae pv. oryzae (strain MAFF 311018)</name>
    <dbReference type="NCBI Taxonomy" id="342109"/>
    <lineage>
        <taxon>Bacteria</taxon>
        <taxon>Pseudomonadati</taxon>
        <taxon>Pseudomonadota</taxon>
        <taxon>Gammaproteobacteria</taxon>
        <taxon>Lysobacterales</taxon>
        <taxon>Lysobacteraceae</taxon>
        <taxon>Xanthomonas</taxon>
    </lineage>
</organism>
<feature type="chain" id="PRO_0000231698" description="Bifunctional uridylyltransferase/uridylyl-removing enzyme">
    <location>
        <begin position="1"/>
        <end position="869"/>
    </location>
</feature>
<feature type="domain" description="HD" evidence="2">
    <location>
        <begin position="450"/>
        <end position="572"/>
    </location>
</feature>
<feature type="domain" description="ACT 1" evidence="1">
    <location>
        <begin position="692"/>
        <end position="774"/>
    </location>
</feature>
<feature type="domain" description="ACT 2" evidence="1">
    <location>
        <begin position="798"/>
        <end position="869"/>
    </location>
</feature>
<feature type="region of interest" description="Uridylyltransferase">
    <location>
        <begin position="1"/>
        <end position="332"/>
    </location>
</feature>
<feature type="region of interest" description="Uridylyl-removing">
    <location>
        <begin position="333"/>
        <end position="691"/>
    </location>
</feature>
<accession>Q2P497</accession>
<proteinExistence type="inferred from homology"/>
<protein>
    <recommendedName>
        <fullName evidence="1">Bifunctional uridylyltransferase/uridylyl-removing enzyme</fullName>
        <shortName evidence="1">UTase/UR</shortName>
    </recommendedName>
    <alternativeName>
        <fullName evidence="1">Bifunctional [protein-PII] modification enzyme</fullName>
    </alternativeName>
    <alternativeName>
        <fullName evidence="1">Bifunctional nitrogen sensor protein</fullName>
    </alternativeName>
    <domain>
        <recommendedName>
            <fullName evidence="1">[Protein-PII] uridylyltransferase</fullName>
            <shortName evidence="1">PII uridylyltransferase</shortName>
            <shortName evidence="1">UTase</shortName>
            <ecNumber evidence="1">2.7.7.59</ecNumber>
        </recommendedName>
    </domain>
    <domain>
        <recommendedName>
            <fullName evidence="1">[Protein-PII]-UMP uridylyl-removing enzyme</fullName>
            <shortName evidence="1">UR</shortName>
            <ecNumber evidence="1">3.1.4.-</ecNumber>
        </recommendedName>
    </domain>
</protein>
<dbReference type="EC" id="2.7.7.59" evidence="1"/>
<dbReference type="EC" id="3.1.4.-" evidence="1"/>
<dbReference type="EMBL" id="AP008229">
    <property type="protein sequence ID" value="BAE68630.1"/>
    <property type="molecule type" value="Genomic_DNA"/>
</dbReference>
<dbReference type="RefSeq" id="WP_011408332.1">
    <property type="nucleotide sequence ID" value="NC_007705.1"/>
</dbReference>
<dbReference type="SMR" id="Q2P497"/>
<dbReference type="KEGG" id="xom:XOO1875"/>
<dbReference type="HOGENOM" id="CLU_012833_0_0_6"/>
<dbReference type="GO" id="GO:0008773">
    <property type="term" value="F:[protein-PII] uridylyltransferase activity"/>
    <property type="evidence" value="ECO:0007669"/>
    <property type="project" value="UniProtKB-UniRule"/>
</dbReference>
<dbReference type="GO" id="GO:0008081">
    <property type="term" value="F:phosphoric diester hydrolase activity"/>
    <property type="evidence" value="ECO:0007669"/>
    <property type="project" value="UniProtKB-UniRule"/>
</dbReference>
<dbReference type="GO" id="GO:0006808">
    <property type="term" value="P:regulation of nitrogen utilization"/>
    <property type="evidence" value="ECO:0007669"/>
    <property type="project" value="UniProtKB-UniRule"/>
</dbReference>
<dbReference type="CDD" id="cd04899">
    <property type="entry name" value="ACT_ACR-UUR-like_2"/>
    <property type="match status" value="1"/>
</dbReference>
<dbReference type="CDD" id="cd04900">
    <property type="entry name" value="ACT_UUR-like_1"/>
    <property type="match status" value="1"/>
</dbReference>
<dbReference type="CDD" id="cd00077">
    <property type="entry name" value="HDc"/>
    <property type="match status" value="1"/>
</dbReference>
<dbReference type="CDD" id="cd05401">
    <property type="entry name" value="NT_GlnE_GlnD_like"/>
    <property type="match status" value="1"/>
</dbReference>
<dbReference type="Gene3D" id="3.30.70.260">
    <property type="match status" value="1"/>
</dbReference>
<dbReference type="Gene3D" id="1.10.3090.10">
    <property type="entry name" value="cca-adding enzyme, domain 2"/>
    <property type="match status" value="1"/>
</dbReference>
<dbReference type="HAMAP" id="MF_00277">
    <property type="entry name" value="PII_uridylyl_transf"/>
    <property type="match status" value="1"/>
</dbReference>
<dbReference type="InterPro" id="IPR045865">
    <property type="entry name" value="ACT-like_dom_sf"/>
</dbReference>
<dbReference type="InterPro" id="IPR002912">
    <property type="entry name" value="ACT_dom"/>
</dbReference>
<dbReference type="InterPro" id="IPR003607">
    <property type="entry name" value="HD/PDEase_dom"/>
</dbReference>
<dbReference type="InterPro" id="IPR006674">
    <property type="entry name" value="HD_domain"/>
</dbReference>
<dbReference type="InterPro" id="IPR043519">
    <property type="entry name" value="NT_sf"/>
</dbReference>
<dbReference type="InterPro" id="IPR013546">
    <property type="entry name" value="PII_UdlTrfase/GS_AdlTrfase"/>
</dbReference>
<dbReference type="InterPro" id="IPR002934">
    <property type="entry name" value="Polymerase_NTP_transf_dom"/>
</dbReference>
<dbReference type="InterPro" id="IPR010043">
    <property type="entry name" value="UTase/UR"/>
</dbReference>
<dbReference type="NCBIfam" id="NF003347">
    <property type="entry name" value="PRK04374.1"/>
    <property type="match status" value="1"/>
</dbReference>
<dbReference type="NCBIfam" id="TIGR01693">
    <property type="entry name" value="UTase_glnD"/>
    <property type="match status" value="1"/>
</dbReference>
<dbReference type="PANTHER" id="PTHR47320">
    <property type="entry name" value="BIFUNCTIONAL URIDYLYLTRANSFERASE/URIDYLYL-REMOVING ENZYME"/>
    <property type="match status" value="1"/>
</dbReference>
<dbReference type="PANTHER" id="PTHR47320:SF1">
    <property type="entry name" value="BIFUNCTIONAL URIDYLYLTRANSFERASE_URIDYLYL-REMOVING ENZYME"/>
    <property type="match status" value="1"/>
</dbReference>
<dbReference type="Pfam" id="PF08335">
    <property type="entry name" value="GlnD_UR_UTase"/>
    <property type="match status" value="1"/>
</dbReference>
<dbReference type="Pfam" id="PF01966">
    <property type="entry name" value="HD"/>
    <property type="match status" value="1"/>
</dbReference>
<dbReference type="Pfam" id="PF01909">
    <property type="entry name" value="NTP_transf_2"/>
    <property type="match status" value="1"/>
</dbReference>
<dbReference type="PIRSF" id="PIRSF006288">
    <property type="entry name" value="PII_uridyltransf"/>
    <property type="match status" value="1"/>
</dbReference>
<dbReference type="SMART" id="SM00471">
    <property type="entry name" value="HDc"/>
    <property type="match status" value="1"/>
</dbReference>
<dbReference type="SUPFAM" id="SSF55021">
    <property type="entry name" value="ACT-like"/>
    <property type="match status" value="2"/>
</dbReference>
<dbReference type="SUPFAM" id="SSF109604">
    <property type="entry name" value="HD-domain/PDEase-like"/>
    <property type="match status" value="1"/>
</dbReference>
<dbReference type="SUPFAM" id="SSF81301">
    <property type="entry name" value="Nucleotidyltransferase"/>
    <property type="match status" value="1"/>
</dbReference>
<dbReference type="SUPFAM" id="SSF81593">
    <property type="entry name" value="Nucleotidyltransferase substrate binding subunit/domain"/>
    <property type="match status" value="1"/>
</dbReference>
<dbReference type="PROSITE" id="PS51671">
    <property type="entry name" value="ACT"/>
    <property type="match status" value="2"/>
</dbReference>
<dbReference type="PROSITE" id="PS51831">
    <property type="entry name" value="HD"/>
    <property type="match status" value="1"/>
</dbReference>
<sequence>MTDAPAERPDPSVAGDADWAAQARPLLVHADMRLRKRFDQGEPIERLVALRARAVDQLMRNAWTRCIPADSGLSLHAVGGYGRGELFPRSDVDVLVLGDSVAQQRHEQHLSRLFALLWDVGLPISHAVRSPTQCMVAAADQTVLTALIESRALVADAAARAALAAAIAPQRVWPPRDFFQAKREELLARHQRFGDTADNLEPDIKDGPGGLRDLQTLGCMALRAFGVKDVEALVGLGHVGCDEAAALRREREELARLRFGLHIVANRPEERLRFDYQKTLAERLGFADDLESLGVEKMMQRFYRSAALIRRISDRLLQRFEEQFDGEATPESLGGGFSLRRGYLAADSDSWPGDDVLQVFALFVHWAAHREVRGLHSLTARALAEVLREFPAYDVADATARELFMALLRGTRAVETLNRMARLGVLGQWIPAFASVSGRMQFDLFHVYTVDQHTLMVLRNIALFAAGRADERFSIAHEVWPRLRKPELLLLAGLFHDIAKGRGGDHSELGAVDTRAFCLAHRLSEGDTELVTWLVEQHLRMSVTAQKQDISDPEVIHRFATLVGTRERLDYLYLLTCADIAGTSPKLWNAWKDRLLADLYFAARRALREGVEHPPPREERLREARESARALMQAQGHDDATIDRQFAGMPDENFLRFRPEQLAWQAASLIEVEIAQTLVKARRAVPDNDALEVFVYSPDRDGLFAAIVATLDRKGYGIHRARVLDAPHDAIFDVFEVLPRDTYADGDPQRLAATLRQVLAGDLQQVRPARRAVPGQLRHFRFAPRVEFSESADGRRTRISLVAPDRPGLLADVAHVLRVQHLRVHDARIATFGERAEDQFQITDEHDRPLSESARQALRDALCACLDPV</sequence>
<evidence type="ECO:0000255" key="1">
    <source>
        <dbReference type="HAMAP-Rule" id="MF_00277"/>
    </source>
</evidence>
<evidence type="ECO:0000255" key="2">
    <source>
        <dbReference type="PROSITE-ProRule" id="PRU01175"/>
    </source>
</evidence>
<gene>
    <name evidence="1" type="primary">glnD</name>
    <name type="ordered locus">XOO1875</name>
</gene>
<comment type="function">
    <text evidence="1">Modifies, by uridylylation and deuridylylation, the PII regulatory proteins (GlnB and homologs), in response to the nitrogen status of the cell that GlnD senses through the glutamine level. Under low glutamine levels, catalyzes the conversion of the PII proteins and UTP to PII-UMP and PPi, while under higher glutamine levels, GlnD hydrolyzes PII-UMP to PII and UMP (deuridylylation). Thus, controls uridylylation state and activity of the PII proteins, and plays an important role in the regulation of nitrogen assimilation and metabolism.</text>
</comment>
<comment type="catalytic activity">
    <reaction evidence="1">
        <text>[protein-PII]-L-tyrosine + UTP = [protein-PII]-uridylyl-L-tyrosine + diphosphate</text>
        <dbReference type="Rhea" id="RHEA:13673"/>
        <dbReference type="Rhea" id="RHEA-COMP:12147"/>
        <dbReference type="Rhea" id="RHEA-COMP:12148"/>
        <dbReference type="ChEBI" id="CHEBI:33019"/>
        <dbReference type="ChEBI" id="CHEBI:46398"/>
        <dbReference type="ChEBI" id="CHEBI:46858"/>
        <dbReference type="ChEBI" id="CHEBI:90602"/>
        <dbReference type="EC" id="2.7.7.59"/>
    </reaction>
</comment>
<comment type="catalytic activity">
    <reaction evidence="1">
        <text>[protein-PII]-uridylyl-L-tyrosine + H2O = [protein-PII]-L-tyrosine + UMP + H(+)</text>
        <dbReference type="Rhea" id="RHEA:48600"/>
        <dbReference type="Rhea" id="RHEA-COMP:12147"/>
        <dbReference type="Rhea" id="RHEA-COMP:12148"/>
        <dbReference type="ChEBI" id="CHEBI:15377"/>
        <dbReference type="ChEBI" id="CHEBI:15378"/>
        <dbReference type="ChEBI" id="CHEBI:46858"/>
        <dbReference type="ChEBI" id="CHEBI:57865"/>
        <dbReference type="ChEBI" id="CHEBI:90602"/>
    </reaction>
</comment>
<comment type="cofactor">
    <cofactor evidence="1">
        <name>Mg(2+)</name>
        <dbReference type="ChEBI" id="CHEBI:18420"/>
    </cofactor>
</comment>
<comment type="activity regulation">
    <text evidence="1">Uridylyltransferase (UTase) activity is inhibited by glutamine, while glutamine activates uridylyl-removing (UR) activity.</text>
</comment>
<comment type="domain">
    <text evidence="1">Has four distinct domains: an N-terminal nucleotidyltransferase (NT) domain responsible for UTase activity, a central HD domain that encodes UR activity, and two C-terminal ACT domains that seem to have a role in glutamine sensing.</text>
</comment>
<comment type="similarity">
    <text evidence="1">Belongs to the GlnD family.</text>
</comment>
<name>GLND_XANOM</name>